<protein>
    <recommendedName>
        <fullName evidence="1">UPF0301 protein Arad_1256</fullName>
    </recommendedName>
</protein>
<accession>B9JAR2</accession>
<name>Y1256_RHIR8</name>
<comment type="similarity">
    <text evidence="1">Belongs to the UPF0301 (AlgH) family.</text>
</comment>
<proteinExistence type="inferred from homology"/>
<evidence type="ECO:0000255" key="1">
    <source>
        <dbReference type="HAMAP-Rule" id="MF_00758"/>
    </source>
</evidence>
<gene>
    <name type="ordered locus">Arad_1256</name>
</gene>
<sequence length="201" mass="21746">MSLSTLKNRRERGLLDGQFLIAMPGMEDRNFNRTVIYICAHSDAGAMGFVINRAQNLTFTDVLLHLDMIKDDDAIVLPPVARDFPIQTGGPVESGRGFVLHSDDYLSDGSIPVSDDISLTATLDIVRAISRGSGPKRATMLLGYAGWGAGQLEAEIGSNGWLNCPANEELIFDRSLDDKYERALALMGINAAMLSPHAGHA</sequence>
<dbReference type="EMBL" id="CP000628">
    <property type="protein sequence ID" value="ACM25745.1"/>
    <property type="molecule type" value="Genomic_DNA"/>
</dbReference>
<dbReference type="RefSeq" id="WP_007693879.1">
    <property type="nucleotide sequence ID" value="NC_011985.1"/>
</dbReference>
<dbReference type="SMR" id="B9JAR2"/>
<dbReference type="STRING" id="311403.Arad_1256"/>
<dbReference type="KEGG" id="ara:Arad_1256"/>
<dbReference type="eggNOG" id="COG1678">
    <property type="taxonomic scope" value="Bacteria"/>
</dbReference>
<dbReference type="HOGENOM" id="CLU_057596_1_0_5"/>
<dbReference type="Proteomes" id="UP000001600">
    <property type="component" value="Chromosome 1"/>
</dbReference>
<dbReference type="GO" id="GO:0005829">
    <property type="term" value="C:cytosol"/>
    <property type="evidence" value="ECO:0007669"/>
    <property type="project" value="TreeGrafter"/>
</dbReference>
<dbReference type="Gene3D" id="3.40.1740.10">
    <property type="entry name" value="VC0467-like"/>
    <property type="match status" value="1"/>
</dbReference>
<dbReference type="HAMAP" id="MF_00758">
    <property type="entry name" value="UPF0301"/>
    <property type="match status" value="1"/>
</dbReference>
<dbReference type="InterPro" id="IPR003774">
    <property type="entry name" value="AlgH-like"/>
</dbReference>
<dbReference type="NCBIfam" id="NF001268">
    <property type="entry name" value="PRK00228.1-4"/>
    <property type="match status" value="1"/>
</dbReference>
<dbReference type="PANTHER" id="PTHR30327">
    <property type="entry name" value="UNCHARACTERIZED PROTEIN YQGE"/>
    <property type="match status" value="1"/>
</dbReference>
<dbReference type="PANTHER" id="PTHR30327:SF1">
    <property type="entry name" value="UPF0301 PROTEIN YQGE"/>
    <property type="match status" value="1"/>
</dbReference>
<dbReference type="Pfam" id="PF02622">
    <property type="entry name" value="DUF179"/>
    <property type="match status" value="1"/>
</dbReference>
<dbReference type="SUPFAM" id="SSF143456">
    <property type="entry name" value="VC0467-like"/>
    <property type="match status" value="1"/>
</dbReference>
<feature type="chain" id="PRO_1000148374" description="UPF0301 protein Arad_1256">
    <location>
        <begin position="1"/>
        <end position="201"/>
    </location>
</feature>
<organism>
    <name type="scientific">Rhizobium rhizogenes (strain K84 / ATCC BAA-868)</name>
    <name type="common">Agrobacterium radiobacter</name>
    <dbReference type="NCBI Taxonomy" id="311403"/>
    <lineage>
        <taxon>Bacteria</taxon>
        <taxon>Pseudomonadati</taxon>
        <taxon>Pseudomonadota</taxon>
        <taxon>Alphaproteobacteria</taxon>
        <taxon>Hyphomicrobiales</taxon>
        <taxon>Rhizobiaceae</taxon>
        <taxon>Rhizobium/Agrobacterium group</taxon>
        <taxon>Rhizobium</taxon>
    </lineage>
</organism>
<reference key="1">
    <citation type="journal article" date="2009" name="J. Bacteriol.">
        <title>Genome sequences of three Agrobacterium biovars help elucidate the evolution of multichromosome genomes in bacteria.</title>
        <authorList>
            <person name="Slater S.C."/>
            <person name="Goldman B.S."/>
            <person name="Goodner B."/>
            <person name="Setubal J.C."/>
            <person name="Farrand S.K."/>
            <person name="Nester E.W."/>
            <person name="Burr T.J."/>
            <person name="Banta L."/>
            <person name="Dickerman A.W."/>
            <person name="Paulsen I."/>
            <person name="Otten L."/>
            <person name="Suen G."/>
            <person name="Welch R."/>
            <person name="Almeida N.F."/>
            <person name="Arnold F."/>
            <person name="Burton O.T."/>
            <person name="Du Z."/>
            <person name="Ewing A."/>
            <person name="Godsy E."/>
            <person name="Heisel S."/>
            <person name="Houmiel K.L."/>
            <person name="Jhaveri J."/>
            <person name="Lu J."/>
            <person name="Miller N.M."/>
            <person name="Norton S."/>
            <person name="Chen Q."/>
            <person name="Phoolcharoen W."/>
            <person name="Ohlin V."/>
            <person name="Ondrusek D."/>
            <person name="Pride N."/>
            <person name="Stricklin S.L."/>
            <person name="Sun J."/>
            <person name="Wheeler C."/>
            <person name="Wilson L."/>
            <person name="Zhu H."/>
            <person name="Wood D.W."/>
        </authorList>
    </citation>
    <scope>NUCLEOTIDE SEQUENCE [LARGE SCALE GENOMIC DNA]</scope>
    <source>
        <strain>K84 / ATCC BAA-868</strain>
    </source>
</reference>